<organism>
    <name type="scientific">Saccharomyces cerevisiae (strain Lalvin EC1118 / Prise de mousse)</name>
    <name type="common">Baker's yeast</name>
    <dbReference type="NCBI Taxonomy" id="643680"/>
    <lineage>
        <taxon>Eukaryota</taxon>
        <taxon>Fungi</taxon>
        <taxon>Dikarya</taxon>
        <taxon>Ascomycota</taxon>
        <taxon>Saccharomycotina</taxon>
        <taxon>Saccharomycetes</taxon>
        <taxon>Saccharomycetales</taxon>
        <taxon>Saccharomycetaceae</taxon>
        <taxon>Saccharomyces</taxon>
    </lineage>
</organism>
<proteinExistence type="inferred from homology"/>
<dbReference type="EMBL" id="FN394216">
    <property type="protein sequence ID" value="CAY86548.1"/>
    <property type="molecule type" value="Genomic_DNA"/>
</dbReference>
<dbReference type="SMR" id="C8ZH19"/>
<dbReference type="HOGENOM" id="CLU_000288_57_15_1"/>
<dbReference type="OrthoDB" id="39980at4893"/>
<dbReference type="Proteomes" id="UP000000286">
    <property type="component" value="Chromosome XV, Scaffold EC1118_1O4"/>
</dbReference>
<dbReference type="GO" id="GO:0005737">
    <property type="term" value="C:cytoplasm"/>
    <property type="evidence" value="ECO:0007669"/>
    <property type="project" value="UniProtKB-UniRule"/>
</dbReference>
<dbReference type="GO" id="GO:0005874">
    <property type="term" value="C:microtubule"/>
    <property type="evidence" value="ECO:0007669"/>
    <property type="project" value="UniProtKB-KW"/>
</dbReference>
<dbReference type="GO" id="GO:0005875">
    <property type="term" value="C:microtubule associated complex"/>
    <property type="evidence" value="ECO:0007669"/>
    <property type="project" value="UniProtKB-UniRule"/>
</dbReference>
<dbReference type="GO" id="GO:0000922">
    <property type="term" value="C:spindle pole"/>
    <property type="evidence" value="ECO:0007669"/>
    <property type="project" value="UniProtKB-SubCell"/>
</dbReference>
<dbReference type="GO" id="GO:0070840">
    <property type="term" value="F:dynein complex binding"/>
    <property type="evidence" value="ECO:0007669"/>
    <property type="project" value="UniProtKB-UniRule"/>
</dbReference>
<dbReference type="GO" id="GO:0051301">
    <property type="term" value="P:cell division"/>
    <property type="evidence" value="ECO:0007669"/>
    <property type="project" value="UniProtKB-KW"/>
</dbReference>
<dbReference type="GO" id="GO:0000132">
    <property type="term" value="P:establishment of mitotic spindle orientation"/>
    <property type="evidence" value="ECO:0007669"/>
    <property type="project" value="UniProtKB-UniRule"/>
</dbReference>
<dbReference type="GO" id="GO:0051012">
    <property type="term" value="P:microtubule sliding"/>
    <property type="evidence" value="ECO:0007669"/>
    <property type="project" value="UniProtKB-UniRule"/>
</dbReference>
<dbReference type="CDD" id="cd00200">
    <property type="entry name" value="WD40"/>
    <property type="match status" value="1"/>
</dbReference>
<dbReference type="FunFam" id="2.130.10.10:FF:000902">
    <property type="entry name" value="Nuclear distribution protein PAC1"/>
    <property type="match status" value="1"/>
</dbReference>
<dbReference type="Gene3D" id="1.20.960.30">
    <property type="match status" value="1"/>
</dbReference>
<dbReference type="Gene3D" id="2.130.10.10">
    <property type="entry name" value="YVTN repeat-like/Quinoprotein amine dehydrogenase"/>
    <property type="match status" value="1"/>
</dbReference>
<dbReference type="HAMAP" id="MF_03141">
    <property type="entry name" value="lis1"/>
    <property type="match status" value="1"/>
</dbReference>
<dbReference type="InterPro" id="IPR017252">
    <property type="entry name" value="Dynein_regulator_LIS1"/>
</dbReference>
<dbReference type="InterPro" id="IPR020472">
    <property type="entry name" value="G-protein_beta_WD-40_rep"/>
</dbReference>
<dbReference type="InterPro" id="IPR037190">
    <property type="entry name" value="LIS1_N"/>
</dbReference>
<dbReference type="InterPro" id="IPR015943">
    <property type="entry name" value="WD40/YVTN_repeat-like_dom_sf"/>
</dbReference>
<dbReference type="InterPro" id="IPR019775">
    <property type="entry name" value="WD40_repeat_CS"/>
</dbReference>
<dbReference type="InterPro" id="IPR036322">
    <property type="entry name" value="WD40_repeat_dom_sf"/>
</dbReference>
<dbReference type="InterPro" id="IPR001680">
    <property type="entry name" value="WD40_rpt"/>
</dbReference>
<dbReference type="InterPro" id="IPR050349">
    <property type="entry name" value="WD_LIS1/nudF_dynein_reg"/>
</dbReference>
<dbReference type="PANTHER" id="PTHR44129">
    <property type="entry name" value="WD REPEAT-CONTAINING PROTEIN POP1"/>
    <property type="match status" value="1"/>
</dbReference>
<dbReference type="Pfam" id="PF00400">
    <property type="entry name" value="WD40"/>
    <property type="match status" value="4"/>
</dbReference>
<dbReference type="PIRSF" id="PIRSF037647">
    <property type="entry name" value="Dynein_regulator_Lis1"/>
    <property type="match status" value="1"/>
</dbReference>
<dbReference type="PRINTS" id="PR00320">
    <property type="entry name" value="GPROTEINBRPT"/>
</dbReference>
<dbReference type="SMART" id="SM00320">
    <property type="entry name" value="WD40"/>
    <property type="match status" value="7"/>
</dbReference>
<dbReference type="SUPFAM" id="SSF109925">
    <property type="entry name" value="Lissencephaly-1 protein (Lis-1, PAF-AH alpha) N-terminal domain"/>
    <property type="match status" value="1"/>
</dbReference>
<dbReference type="SUPFAM" id="SSF50978">
    <property type="entry name" value="WD40 repeat-like"/>
    <property type="match status" value="1"/>
</dbReference>
<dbReference type="PROSITE" id="PS00678">
    <property type="entry name" value="WD_REPEATS_1"/>
    <property type="match status" value="2"/>
</dbReference>
<dbReference type="PROSITE" id="PS50082">
    <property type="entry name" value="WD_REPEATS_2"/>
    <property type="match status" value="2"/>
</dbReference>
<dbReference type="PROSITE" id="PS50294">
    <property type="entry name" value="WD_REPEATS_REGION"/>
    <property type="match status" value="1"/>
</dbReference>
<reference key="1">
    <citation type="journal article" date="2009" name="Proc. Natl. Acad. Sci. U.S.A.">
        <title>Eukaryote-to-eukaryote gene transfer events revealed by the genome sequence of the wine yeast Saccharomyces cerevisiae EC1118.</title>
        <authorList>
            <person name="Novo M."/>
            <person name="Bigey F."/>
            <person name="Beyne E."/>
            <person name="Galeote V."/>
            <person name="Gavory F."/>
            <person name="Mallet S."/>
            <person name="Cambon B."/>
            <person name="Legras J.-L."/>
            <person name="Wincker P."/>
            <person name="Casaregola S."/>
            <person name="Dequin S."/>
        </authorList>
    </citation>
    <scope>NUCLEOTIDE SEQUENCE [LARGE SCALE GENOMIC DNA]</scope>
    <source>
        <strain>Lalvin EC1118 / Prise de mousse</strain>
    </source>
</reference>
<keyword id="KW-0131">Cell cycle</keyword>
<keyword id="KW-0132">Cell division</keyword>
<keyword id="KW-0175">Coiled coil</keyword>
<keyword id="KW-0963">Cytoplasm</keyword>
<keyword id="KW-0206">Cytoskeleton</keyword>
<keyword id="KW-0493">Microtubule</keyword>
<keyword id="KW-0498">Mitosis</keyword>
<keyword id="KW-0677">Repeat</keyword>
<keyword id="KW-0813">Transport</keyword>
<keyword id="KW-0853">WD repeat</keyword>
<sequence length="494" mass="56905">MTNWQQQLPLTDTQKNELDKSVLRYLNWNYKQTVRHEHAQDYESVRHAIVTLSGFLLQESVDRQEFISNNDTSNESMVDIDELLLPKKWNSIVRLQKKIIELEQNTETLVSQIKDLNTQVSELAQFKPTTSNGTSAHNVLKWIPRNLPSCLINVESSVTSVKLHPNLPIVFVATDHGKLYAFDLFNYTIPLASLQSHTKAITSMDVLFTNFTNSSKKNYLVVVTASKDLQIHVFKWVSEECKFQQIRSLLGHEHIVSAVKIWQKNNDVHIASCSRDQTVKIWDFHNGWSLKTFQPHSQWVRSIDVLGDYIISGSHDTTLRLTHWPSGNGLSVGTGHEFPIEKVKFIHFIEDSPEIRFRTPSTDRYKNWGMQYCVSASRDRTIKIWEIPLPTLMAHRAPIPNPTDSNFRCVLTFKGHLSWVRDISIRGQYLFSCADDKSVRCWDLNTGQCLHVWEKLHTGFVNCLDLDVDFDSNVTPRQMMVTGGLDCKSNVFMR</sequence>
<gene>
    <name evidence="1" type="primary">PAC1</name>
    <name evidence="1" type="synonym">LIS1</name>
    <name type="ORF">EC1118_1O4_4995g</name>
</gene>
<protein>
    <recommendedName>
        <fullName evidence="1">Nuclear distribution protein PAC1</fullName>
    </recommendedName>
    <alternativeName>
        <fullName evidence="1">Lissencephaly-1 homolog</fullName>
        <shortName evidence="1">LIS-1</shortName>
    </alternativeName>
    <alternativeName>
        <fullName evidence="1">nudF homolog</fullName>
    </alternativeName>
</protein>
<name>LIS1_YEAS8</name>
<evidence type="ECO:0000255" key="1">
    <source>
        <dbReference type="HAMAP-Rule" id="MF_03141"/>
    </source>
</evidence>
<feature type="chain" id="PRO_0000405102" description="Nuclear distribution protein PAC1">
    <location>
        <begin position="1"/>
        <end position="494"/>
    </location>
</feature>
<feature type="domain" description="LisH" evidence="1">
    <location>
        <begin position="14"/>
        <end position="46"/>
    </location>
</feature>
<feature type="repeat" description="WD 1">
    <location>
        <begin position="153"/>
        <end position="192"/>
    </location>
</feature>
<feature type="repeat" description="WD 2">
    <location>
        <begin position="196"/>
        <end position="244"/>
    </location>
</feature>
<feature type="repeat" description="WD 3">
    <location>
        <begin position="251"/>
        <end position="292"/>
    </location>
</feature>
<feature type="repeat" description="WD 4">
    <location>
        <begin position="295"/>
        <end position="334"/>
    </location>
</feature>
<feature type="repeat" description="WD 5">
    <location>
        <begin position="347"/>
        <end position="395"/>
    </location>
</feature>
<feature type="repeat" description="WD 6">
    <location>
        <begin position="415"/>
        <end position="454"/>
    </location>
</feature>
<feature type="repeat" description="WD 7">
    <location>
        <begin position="457"/>
        <end position="492"/>
    </location>
</feature>
<feature type="coiled-coil region" evidence="1">
    <location>
        <begin position="90"/>
        <end position="123"/>
    </location>
</feature>
<comment type="function">
    <text evidence="1">Positively regulates the activity of the minus-end directed microtubule motor protein dynein. Plays a central role in positioning the mitotic spindle at the bud neck during cell division. Targets cytoplasmic dynein to microtubule plus ends, thereby promoting dynein-mediated microtubule sliding along the bud cortex and consequently the movement of the mitotic spindle to the bud neck.</text>
</comment>
<comment type="subunit">
    <text evidence="1">Self-associates. Interacts with NDL1 and dynein.</text>
</comment>
<comment type="subcellular location">
    <subcellularLocation>
        <location evidence="1">Cytoplasm</location>
        <location evidence="1">Cytoskeleton</location>
    </subcellularLocation>
    <subcellularLocation>
        <location evidence="1">Cytoplasm</location>
        <location evidence="1">Cytoskeleton</location>
        <location evidence="1">Spindle pole</location>
    </subcellularLocation>
    <text evidence="1">Localizes to the plus ends of microtubules and the mitotic spindle poles.</text>
</comment>
<comment type="domain">
    <text evidence="1">Dimerization mediated by the LisH domain may be required to activate dynein.</text>
</comment>
<comment type="similarity">
    <text evidence="1">Belongs to the WD repeat LIS1/nudF family.</text>
</comment>
<accession>C8ZH19</accession>